<feature type="chain" id="PRO_1000072530" description="Asparagine--tRNA ligase">
    <location>
        <begin position="1"/>
        <end position="432"/>
    </location>
</feature>
<dbReference type="EC" id="6.1.1.22" evidence="1"/>
<dbReference type="EMBL" id="CP000517">
    <property type="protein sequence ID" value="ABX27284.1"/>
    <property type="molecule type" value="Genomic_DNA"/>
</dbReference>
<dbReference type="RefSeq" id="WP_012211950.1">
    <property type="nucleotide sequence ID" value="NC_010080.1"/>
</dbReference>
<dbReference type="SMR" id="A8YVJ7"/>
<dbReference type="KEGG" id="lhe:lhv_1270"/>
<dbReference type="eggNOG" id="COG0017">
    <property type="taxonomic scope" value="Bacteria"/>
</dbReference>
<dbReference type="HOGENOM" id="CLU_004553_2_0_9"/>
<dbReference type="Proteomes" id="UP000000790">
    <property type="component" value="Chromosome"/>
</dbReference>
<dbReference type="GO" id="GO:0005737">
    <property type="term" value="C:cytoplasm"/>
    <property type="evidence" value="ECO:0007669"/>
    <property type="project" value="UniProtKB-SubCell"/>
</dbReference>
<dbReference type="GO" id="GO:0004816">
    <property type="term" value="F:asparagine-tRNA ligase activity"/>
    <property type="evidence" value="ECO:0007669"/>
    <property type="project" value="UniProtKB-UniRule"/>
</dbReference>
<dbReference type="GO" id="GO:0005524">
    <property type="term" value="F:ATP binding"/>
    <property type="evidence" value="ECO:0007669"/>
    <property type="project" value="UniProtKB-UniRule"/>
</dbReference>
<dbReference type="GO" id="GO:0140096">
    <property type="term" value="F:catalytic activity, acting on a protein"/>
    <property type="evidence" value="ECO:0007669"/>
    <property type="project" value="UniProtKB-ARBA"/>
</dbReference>
<dbReference type="GO" id="GO:0003676">
    <property type="term" value="F:nucleic acid binding"/>
    <property type="evidence" value="ECO:0007669"/>
    <property type="project" value="InterPro"/>
</dbReference>
<dbReference type="GO" id="GO:0016740">
    <property type="term" value="F:transferase activity"/>
    <property type="evidence" value="ECO:0007669"/>
    <property type="project" value="UniProtKB-ARBA"/>
</dbReference>
<dbReference type="GO" id="GO:0006421">
    <property type="term" value="P:asparaginyl-tRNA aminoacylation"/>
    <property type="evidence" value="ECO:0007669"/>
    <property type="project" value="UniProtKB-UniRule"/>
</dbReference>
<dbReference type="CDD" id="cd04323">
    <property type="entry name" value="AsnRS_cyto_like_N"/>
    <property type="match status" value="1"/>
</dbReference>
<dbReference type="CDD" id="cd00776">
    <property type="entry name" value="AsxRS_core"/>
    <property type="match status" value="1"/>
</dbReference>
<dbReference type="Gene3D" id="3.30.930.10">
    <property type="entry name" value="Bira Bifunctional Protein, Domain 2"/>
    <property type="match status" value="1"/>
</dbReference>
<dbReference type="Gene3D" id="2.40.50.140">
    <property type="entry name" value="Nucleic acid-binding proteins"/>
    <property type="match status" value="1"/>
</dbReference>
<dbReference type="HAMAP" id="MF_00534">
    <property type="entry name" value="Asn_tRNA_synth"/>
    <property type="match status" value="1"/>
</dbReference>
<dbReference type="InterPro" id="IPR004364">
    <property type="entry name" value="Aa-tRNA-synt_II"/>
</dbReference>
<dbReference type="InterPro" id="IPR006195">
    <property type="entry name" value="aa-tRNA-synth_II"/>
</dbReference>
<dbReference type="InterPro" id="IPR045864">
    <property type="entry name" value="aa-tRNA-synth_II/BPL/LPL"/>
</dbReference>
<dbReference type="InterPro" id="IPR004522">
    <property type="entry name" value="Asn-tRNA-ligase"/>
</dbReference>
<dbReference type="InterPro" id="IPR002312">
    <property type="entry name" value="Asp/Asn-tRNA-synth_IIb"/>
</dbReference>
<dbReference type="InterPro" id="IPR012340">
    <property type="entry name" value="NA-bd_OB-fold"/>
</dbReference>
<dbReference type="InterPro" id="IPR004365">
    <property type="entry name" value="NA-bd_OB_tRNA"/>
</dbReference>
<dbReference type="NCBIfam" id="TIGR00457">
    <property type="entry name" value="asnS"/>
    <property type="match status" value="1"/>
</dbReference>
<dbReference type="NCBIfam" id="NF003037">
    <property type="entry name" value="PRK03932.1"/>
    <property type="match status" value="1"/>
</dbReference>
<dbReference type="PANTHER" id="PTHR22594:SF34">
    <property type="entry name" value="ASPARAGINE--TRNA LIGASE, MITOCHONDRIAL-RELATED"/>
    <property type="match status" value="1"/>
</dbReference>
<dbReference type="PANTHER" id="PTHR22594">
    <property type="entry name" value="ASPARTYL/LYSYL-TRNA SYNTHETASE"/>
    <property type="match status" value="1"/>
</dbReference>
<dbReference type="Pfam" id="PF00152">
    <property type="entry name" value="tRNA-synt_2"/>
    <property type="match status" value="1"/>
</dbReference>
<dbReference type="Pfam" id="PF01336">
    <property type="entry name" value="tRNA_anti-codon"/>
    <property type="match status" value="1"/>
</dbReference>
<dbReference type="PRINTS" id="PR01042">
    <property type="entry name" value="TRNASYNTHASP"/>
</dbReference>
<dbReference type="SUPFAM" id="SSF55681">
    <property type="entry name" value="Class II aaRS and biotin synthetases"/>
    <property type="match status" value="1"/>
</dbReference>
<dbReference type="SUPFAM" id="SSF50249">
    <property type="entry name" value="Nucleic acid-binding proteins"/>
    <property type="match status" value="1"/>
</dbReference>
<dbReference type="PROSITE" id="PS50862">
    <property type="entry name" value="AA_TRNA_LIGASE_II"/>
    <property type="match status" value="1"/>
</dbReference>
<name>SYN_LACH4</name>
<reference key="1">
    <citation type="journal article" date="2008" name="J. Bacteriol.">
        <title>Genome sequence of Lactobacillus helveticus: an organism distinguished by selective gene loss and IS element expansion.</title>
        <authorList>
            <person name="Callanan M."/>
            <person name="Kaleta P."/>
            <person name="O'Callaghan J."/>
            <person name="O'Sullivan O."/>
            <person name="Jordan K."/>
            <person name="McAuliffe O."/>
            <person name="Sangrador-Vegas A."/>
            <person name="Slattery L."/>
            <person name="Fitzgerald G.F."/>
            <person name="Beresford T."/>
            <person name="Ross R.P."/>
        </authorList>
    </citation>
    <scope>NUCLEOTIDE SEQUENCE [LARGE SCALE GENOMIC DNA]</scope>
    <source>
        <strain>DPC 4571</strain>
    </source>
</reference>
<sequence length="432" mass="50261">MTELISIKDSSKHVDQEVKMHVWLTDKRSSGKIIFLQLRDGTAFFQGVVRKNDVTDEVFEVAKSLRQESSFYITGTVHEDARSHFGYEIQITDLKVVSNNEGYPIGNKEHGIDFLLDHRHLWLRSKKPFAIMQIRNTMFKATVDFFEKEDFIKFDAPIFMHSAPEGTTQLFHVDYFDHDAYLSQSGQLYGEAGAMAFGKIFTFGPTFRAEESKGRRHMTEFWMMEPEMAWMHQDESLDLQERYLAYMVKQVLDKNEYELKILGRDPEKLRPTTEGNFVRLPYDDAVKMLQDAGRDFKWGDDFGAPDEGYISEQYDRPVFIVNYPTSIKPFYMKKNPDNPKEYLCADVIAPEGYGEIFGGSEREGNYEVLEQQIIDAGLNLEDYQWYLDLRKFGGVPHSGFGMGFERTIAWVCHLDHIREAIPFPRLINRMQP</sequence>
<evidence type="ECO:0000255" key="1">
    <source>
        <dbReference type="HAMAP-Rule" id="MF_00534"/>
    </source>
</evidence>
<proteinExistence type="inferred from homology"/>
<gene>
    <name evidence="1" type="primary">asnS</name>
    <name type="ordered locus">lhv_1270</name>
</gene>
<accession>A8YVJ7</accession>
<keyword id="KW-0030">Aminoacyl-tRNA synthetase</keyword>
<keyword id="KW-0067">ATP-binding</keyword>
<keyword id="KW-0963">Cytoplasm</keyword>
<keyword id="KW-0436">Ligase</keyword>
<keyword id="KW-0547">Nucleotide-binding</keyword>
<keyword id="KW-0648">Protein biosynthesis</keyword>
<comment type="catalytic activity">
    <reaction evidence="1">
        <text>tRNA(Asn) + L-asparagine + ATP = L-asparaginyl-tRNA(Asn) + AMP + diphosphate + H(+)</text>
        <dbReference type="Rhea" id="RHEA:11180"/>
        <dbReference type="Rhea" id="RHEA-COMP:9659"/>
        <dbReference type="Rhea" id="RHEA-COMP:9674"/>
        <dbReference type="ChEBI" id="CHEBI:15378"/>
        <dbReference type="ChEBI" id="CHEBI:30616"/>
        <dbReference type="ChEBI" id="CHEBI:33019"/>
        <dbReference type="ChEBI" id="CHEBI:58048"/>
        <dbReference type="ChEBI" id="CHEBI:78442"/>
        <dbReference type="ChEBI" id="CHEBI:78515"/>
        <dbReference type="ChEBI" id="CHEBI:456215"/>
        <dbReference type="EC" id="6.1.1.22"/>
    </reaction>
</comment>
<comment type="subunit">
    <text evidence="1">Homodimer.</text>
</comment>
<comment type="subcellular location">
    <subcellularLocation>
        <location evidence="1">Cytoplasm</location>
    </subcellularLocation>
</comment>
<comment type="similarity">
    <text evidence="1">Belongs to the class-II aminoacyl-tRNA synthetase family.</text>
</comment>
<organism>
    <name type="scientific">Lactobacillus helveticus (strain DPC 4571)</name>
    <dbReference type="NCBI Taxonomy" id="405566"/>
    <lineage>
        <taxon>Bacteria</taxon>
        <taxon>Bacillati</taxon>
        <taxon>Bacillota</taxon>
        <taxon>Bacilli</taxon>
        <taxon>Lactobacillales</taxon>
        <taxon>Lactobacillaceae</taxon>
        <taxon>Lactobacillus</taxon>
    </lineage>
</organism>
<protein>
    <recommendedName>
        <fullName evidence="1">Asparagine--tRNA ligase</fullName>
        <ecNumber evidence="1">6.1.1.22</ecNumber>
    </recommendedName>
    <alternativeName>
        <fullName evidence="1">Asparaginyl-tRNA synthetase</fullName>
        <shortName evidence="1">AsnRS</shortName>
    </alternativeName>
</protein>